<gene>
    <name evidence="4" type="primary">gluC</name>
    <name type="ordered locus">CE1846</name>
</gene>
<dbReference type="EMBL" id="AB083297">
    <property type="protein sequence ID" value="BAB88900.1"/>
    <property type="molecule type" value="Genomic_DNA"/>
</dbReference>
<dbReference type="EMBL" id="BA000035">
    <property type="protein sequence ID" value="BAC18656.1"/>
    <property type="status" value="ALT_INIT"/>
    <property type="molecule type" value="Genomic_DNA"/>
</dbReference>
<dbReference type="RefSeq" id="WP_035108928.1">
    <property type="nucleotide sequence ID" value="NC_004369.1"/>
</dbReference>
<dbReference type="SMR" id="Q8RQL5"/>
<dbReference type="STRING" id="196164.gene:10742274"/>
<dbReference type="KEGG" id="cef:CE1846"/>
<dbReference type="eggNOG" id="COG0765">
    <property type="taxonomic scope" value="Bacteria"/>
</dbReference>
<dbReference type="HOGENOM" id="CLU_019602_1_0_11"/>
<dbReference type="OrthoDB" id="3181282at2"/>
<dbReference type="Proteomes" id="UP000001409">
    <property type="component" value="Chromosome"/>
</dbReference>
<dbReference type="GO" id="GO:0043190">
    <property type="term" value="C:ATP-binding cassette (ABC) transporter complex"/>
    <property type="evidence" value="ECO:0007669"/>
    <property type="project" value="InterPro"/>
</dbReference>
<dbReference type="GO" id="GO:0022857">
    <property type="term" value="F:transmembrane transporter activity"/>
    <property type="evidence" value="ECO:0007669"/>
    <property type="project" value="InterPro"/>
</dbReference>
<dbReference type="GO" id="GO:0006865">
    <property type="term" value="P:amino acid transport"/>
    <property type="evidence" value="ECO:0007669"/>
    <property type="project" value="UniProtKB-KW"/>
</dbReference>
<dbReference type="CDD" id="cd06261">
    <property type="entry name" value="TM_PBP2"/>
    <property type="match status" value="1"/>
</dbReference>
<dbReference type="Gene3D" id="1.10.3720.10">
    <property type="entry name" value="MetI-like"/>
    <property type="match status" value="1"/>
</dbReference>
<dbReference type="InterPro" id="IPR010065">
    <property type="entry name" value="AA_ABC_transptr_permease_3TM"/>
</dbReference>
<dbReference type="InterPro" id="IPR043429">
    <property type="entry name" value="ArtM/GltK/GlnP/TcyL/YhdX-like"/>
</dbReference>
<dbReference type="InterPro" id="IPR000515">
    <property type="entry name" value="MetI-like"/>
</dbReference>
<dbReference type="InterPro" id="IPR035906">
    <property type="entry name" value="MetI-like_sf"/>
</dbReference>
<dbReference type="NCBIfam" id="TIGR01726">
    <property type="entry name" value="HEQRo_perm_3TM"/>
    <property type="match status" value="1"/>
</dbReference>
<dbReference type="PANTHER" id="PTHR30614:SF37">
    <property type="entry name" value="AMINO-ACID ABC TRANSPORTER PERMEASE PROTEIN YHDX-RELATED"/>
    <property type="match status" value="1"/>
</dbReference>
<dbReference type="PANTHER" id="PTHR30614">
    <property type="entry name" value="MEMBRANE COMPONENT OF AMINO ACID ABC TRANSPORTER"/>
    <property type="match status" value="1"/>
</dbReference>
<dbReference type="Pfam" id="PF00528">
    <property type="entry name" value="BPD_transp_1"/>
    <property type="match status" value="1"/>
</dbReference>
<dbReference type="SUPFAM" id="SSF161098">
    <property type="entry name" value="MetI-like"/>
    <property type="match status" value="1"/>
</dbReference>
<dbReference type="PROSITE" id="PS50928">
    <property type="entry name" value="ABC_TM1"/>
    <property type="match status" value="1"/>
</dbReference>
<feature type="chain" id="PRO_0000060040" description="Glutamate transport system permease protein GluC">
    <location>
        <begin position="1"/>
        <end position="228"/>
    </location>
</feature>
<feature type="transmembrane region" description="Helical" evidence="2">
    <location>
        <begin position="16"/>
        <end position="36"/>
    </location>
</feature>
<feature type="transmembrane region" description="Helical" evidence="2">
    <location>
        <begin position="64"/>
        <end position="84"/>
    </location>
</feature>
<feature type="transmembrane region" description="Helical" evidence="2">
    <location>
        <begin position="100"/>
        <end position="120"/>
    </location>
</feature>
<feature type="transmembrane region" description="Helical" evidence="2">
    <location>
        <begin position="195"/>
        <end position="215"/>
    </location>
</feature>
<feature type="domain" description="ABC transmembrane type-1" evidence="3">
    <location>
        <begin position="16"/>
        <end position="217"/>
    </location>
</feature>
<accession>Q8RQL5</accession>
<protein>
    <recommendedName>
        <fullName evidence="1">Glutamate transport system permease protein GluC</fullName>
    </recommendedName>
</protein>
<organism>
    <name type="scientific">Corynebacterium efficiens (strain DSM 44549 / YS-314 / AJ 12310 / JCM 11189 / NBRC 100395)</name>
    <dbReference type="NCBI Taxonomy" id="196164"/>
    <lineage>
        <taxon>Bacteria</taxon>
        <taxon>Bacillati</taxon>
        <taxon>Actinomycetota</taxon>
        <taxon>Actinomycetes</taxon>
        <taxon>Mycobacteriales</taxon>
        <taxon>Corynebacteriaceae</taxon>
        <taxon>Corynebacterium</taxon>
    </lineage>
</organism>
<proteinExistence type="inferred from homology"/>
<evidence type="ECO:0000250" key="1">
    <source>
        <dbReference type="UniProtKB" id="P48244"/>
    </source>
</evidence>
<evidence type="ECO:0000255" key="2"/>
<evidence type="ECO:0000255" key="3">
    <source>
        <dbReference type="PROSITE-ProRule" id="PRU00441"/>
    </source>
</evidence>
<evidence type="ECO:0000303" key="4">
    <source ref="1"/>
</evidence>
<evidence type="ECO:0000305" key="5"/>
<keyword id="KW-0029">Amino-acid transport</keyword>
<keyword id="KW-1003">Cell membrane</keyword>
<keyword id="KW-0472">Membrane</keyword>
<keyword id="KW-1185">Reference proteome</keyword>
<keyword id="KW-0812">Transmembrane</keyword>
<keyword id="KW-1133">Transmembrane helix</keyword>
<keyword id="KW-0813">Transport</keyword>
<comment type="function">
    <text evidence="1">Part of the ABC transporter complex GluABCD involved in glutamate uptake. Probably responsible for the translocation of the substrate across the membrane.</text>
</comment>
<comment type="subunit">
    <text evidence="1">The complex is composed of two ATP-binding proteins (GluA), two transmembrane proteins (GluC and GluD) and a solute-binding protein (GluB).</text>
</comment>
<comment type="subcellular location">
    <subcellularLocation>
        <location evidence="1">Cell membrane</location>
        <topology evidence="2">Multi-pass membrane protein</topology>
    </subcellularLocation>
</comment>
<comment type="similarity">
    <text evidence="5">Belongs to the binding-protein-dependent transport system permease family. HisMQ subfamily.</text>
</comment>
<comment type="sequence caution" evidence="5">
    <conflict type="erroneous initiation">
        <sequence resource="EMBL-CDS" id="BAC18656"/>
    </conflict>
</comment>
<reference key="1">
    <citation type="submission" date="2002-04" db="EMBL/GenBank/DDBJ databases">
        <title>Corynebacterium efficiens gluA, gluB, gluC and gluD genes, complete CDS.</title>
        <authorList>
            <person name="Nonaka G."/>
            <person name="Kimura E."/>
            <person name="Kawahara Y."/>
            <person name="Sugimoto S."/>
        </authorList>
    </citation>
    <scope>NUCLEOTIDE SEQUENCE [GENOMIC DNA]</scope>
    <source>
        <strain>DSM 44549 / YS-314 / AJ 12310 / JCM 11189 / NBRC 100395</strain>
    </source>
</reference>
<reference key="2">
    <citation type="journal article" date="2003" name="Genome Res.">
        <title>Comparative complete genome sequence analysis of the amino acid replacements responsible for the thermostability of Corynebacterium efficiens.</title>
        <authorList>
            <person name="Nishio Y."/>
            <person name="Nakamura Y."/>
            <person name="Kawarabayasi Y."/>
            <person name="Usuda Y."/>
            <person name="Kimura E."/>
            <person name="Sugimoto S."/>
            <person name="Matsui K."/>
            <person name="Yamagishi A."/>
            <person name="Kikuchi H."/>
            <person name="Ikeo K."/>
            <person name="Gojobori T."/>
        </authorList>
    </citation>
    <scope>NUCLEOTIDE SEQUENCE [LARGE SCALE GENOMIC DNA]</scope>
    <source>
        <strain>DSM 44549 / YS-314 / AJ 12310 / JCM 11189 / NBRC 100395</strain>
    </source>
</reference>
<name>GLUC_COREF</name>
<sequence length="228" mass="24425">MSTLWADLGPSLLPAFWVTIQLTVYSAIGSMILGTILTAMRVSPVKILRSISTAYINTVRNTPLTLVILFCSFGLYQNLGLTLAGRDSSTFLADNNFRLAVLGFILYTSAFVAESLRSGINTVHFGQAEAARSLGLGFSDIFRSIIFPQAVRAAIIPLGNTLIALTKNTTIASVIGVGEASLLMKSTIENHANMLFVVFAIFAVGFMILTLPMGLGLGKLAEKMAVKK</sequence>